<comment type="catalytic activity">
    <reaction>
        <text>a monocarboxylic acid amide + H2O = a monocarboxylate + NH4(+)</text>
        <dbReference type="Rhea" id="RHEA:12020"/>
        <dbReference type="ChEBI" id="CHEBI:15377"/>
        <dbReference type="ChEBI" id="CHEBI:28938"/>
        <dbReference type="ChEBI" id="CHEBI:35757"/>
        <dbReference type="ChEBI" id="CHEBI:83628"/>
        <dbReference type="EC" id="3.5.1.4"/>
    </reaction>
</comment>
<comment type="similarity">
    <text evidence="2">Belongs to the amidase family.</text>
</comment>
<name>AMI3_MYCTU</name>
<proteinExistence type="evidence at protein level"/>
<dbReference type="EC" id="3.5.1.4"/>
<dbReference type="EMBL" id="AL123456">
    <property type="protein sequence ID" value="CCP45690.1"/>
    <property type="molecule type" value="Genomic_DNA"/>
</dbReference>
<dbReference type="PIR" id="C70925">
    <property type="entry name" value="C70925"/>
</dbReference>
<dbReference type="RefSeq" id="NP_217404.1">
    <property type="nucleotide sequence ID" value="NC_000962.3"/>
</dbReference>
<dbReference type="RefSeq" id="WP_003414672.1">
    <property type="nucleotide sequence ID" value="NZ_NVQJ01000006.1"/>
</dbReference>
<dbReference type="SMR" id="P9WQ95"/>
<dbReference type="FunCoup" id="P9WQ95">
    <property type="interactions" value="2"/>
</dbReference>
<dbReference type="STRING" id="83332.Rv2888c"/>
<dbReference type="PaxDb" id="83332-Rv2888c"/>
<dbReference type="DNASU" id="887401"/>
<dbReference type="GeneID" id="887401"/>
<dbReference type="KEGG" id="mtu:Rv2888c"/>
<dbReference type="KEGG" id="mtv:RVBD_2888c"/>
<dbReference type="TubercuList" id="Rv2888c"/>
<dbReference type="eggNOG" id="COG0154">
    <property type="taxonomic scope" value="Bacteria"/>
</dbReference>
<dbReference type="InParanoid" id="P9WQ95"/>
<dbReference type="OrthoDB" id="5175573at2"/>
<dbReference type="PhylomeDB" id="P9WQ95"/>
<dbReference type="Proteomes" id="UP000001584">
    <property type="component" value="Chromosome"/>
</dbReference>
<dbReference type="GO" id="GO:0009274">
    <property type="term" value="C:peptidoglycan-based cell wall"/>
    <property type="evidence" value="ECO:0007005"/>
    <property type="project" value="MTBBASE"/>
</dbReference>
<dbReference type="GO" id="GO:0005886">
    <property type="term" value="C:plasma membrane"/>
    <property type="evidence" value="ECO:0007005"/>
    <property type="project" value="MTBBASE"/>
</dbReference>
<dbReference type="GO" id="GO:0004040">
    <property type="term" value="F:amidase activity"/>
    <property type="evidence" value="ECO:0007669"/>
    <property type="project" value="UniProtKB-EC"/>
</dbReference>
<dbReference type="FunFam" id="3.90.1300.10:FF:000008">
    <property type="entry name" value="Amidase AmiC"/>
    <property type="match status" value="1"/>
</dbReference>
<dbReference type="Gene3D" id="3.90.1300.10">
    <property type="entry name" value="Amidase signature (AS) domain"/>
    <property type="match status" value="1"/>
</dbReference>
<dbReference type="InterPro" id="IPR000120">
    <property type="entry name" value="Amidase"/>
</dbReference>
<dbReference type="InterPro" id="IPR020556">
    <property type="entry name" value="Amidase_CS"/>
</dbReference>
<dbReference type="InterPro" id="IPR023631">
    <property type="entry name" value="Amidase_dom"/>
</dbReference>
<dbReference type="InterPro" id="IPR036928">
    <property type="entry name" value="AS_sf"/>
</dbReference>
<dbReference type="NCBIfam" id="NF005899">
    <property type="entry name" value="PRK07869.1"/>
    <property type="match status" value="1"/>
</dbReference>
<dbReference type="PANTHER" id="PTHR11895:SF7">
    <property type="entry name" value="GLUTAMYL-TRNA(GLN) AMIDOTRANSFERASE SUBUNIT A, MITOCHONDRIAL"/>
    <property type="match status" value="1"/>
</dbReference>
<dbReference type="PANTHER" id="PTHR11895">
    <property type="entry name" value="TRANSAMIDASE"/>
    <property type="match status" value="1"/>
</dbReference>
<dbReference type="Pfam" id="PF01425">
    <property type="entry name" value="Amidase"/>
    <property type="match status" value="1"/>
</dbReference>
<dbReference type="SUPFAM" id="SSF75304">
    <property type="entry name" value="Amidase signature (AS) enzymes"/>
    <property type="match status" value="1"/>
</dbReference>
<dbReference type="PROSITE" id="PS00571">
    <property type="entry name" value="AMIDASES"/>
    <property type="match status" value="1"/>
</dbReference>
<protein>
    <recommendedName>
        <fullName>Putative amidase AmiC</fullName>
        <ecNumber>3.5.1.4</ecNumber>
    </recommendedName>
</protein>
<keyword id="KW-0378">Hydrolase</keyword>
<keyword id="KW-1185">Reference proteome</keyword>
<evidence type="ECO:0000250" key="1"/>
<evidence type="ECO:0000305" key="2"/>
<reference key="1">
    <citation type="journal article" date="1998" name="Nature">
        <title>Deciphering the biology of Mycobacterium tuberculosis from the complete genome sequence.</title>
        <authorList>
            <person name="Cole S.T."/>
            <person name="Brosch R."/>
            <person name="Parkhill J."/>
            <person name="Garnier T."/>
            <person name="Churcher C.M."/>
            <person name="Harris D.E."/>
            <person name="Gordon S.V."/>
            <person name="Eiglmeier K."/>
            <person name="Gas S."/>
            <person name="Barry C.E. III"/>
            <person name="Tekaia F."/>
            <person name="Badcock K."/>
            <person name="Basham D."/>
            <person name="Brown D."/>
            <person name="Chillingworth T."/>
            <person name="Connor R."/>
            <person name="Davies R.M."/>
            <person name="Devlin K."/>
            <person name="Feltwell T."/>
            <person name="Gentles S."/>
            <person name="Hamlin N."/>
            <person name="Holroyd S."/>
            <person name="Hornsby T."/>
            <person name="Jagels K."/>
            <person name="Krogh A."/>
            <person name="McLean J."/>
            <person name="Moule S."/>
            <person name="Murphy L.D."/>
            <person name="Oliver S."/>
            <person name="Osborne J."/>
            <person name="Quail M.A."/>
            <person name="Rajandream M.A."/>
            <person name="Rogers J."/>
            <person name="Rutter S."/>
            <person name="Seeger K."/>
            <person name="Skelton S."/>
            <person name="Squares S."/>
            <person name="Squares R."/>
            <person name="Sulston J.E."/>
            <person name="Taylor K."/>
            <person name="Whitehead S."/>
            <person name="Barrell B.G."/>
        </authorList>
    </citation>
    <scope>NUCLEOTIDE SEQUENCE [LARGE SCALE GENOMIC DNA]</scope>
    <source>
        <strain>ATCC 25618 / H37Rv</strain>
    </source>
</reference>
<reference key="2">
    <citation type="journal article" date="2011" name="Mol. Cell. Proteomics">
        <title>Proteogenomic analysis of Mycobacterium tuberculosis by high resolution mass spectrometry.</title>
        <authorList>
            <person name="Kelkar D.S."/>
            <person name="Kumar D."/>
            <person name="Kumar P."/>
            <person name="Balakrishnan L."/>
            <person name="Muthusamy B."/>
            <person name="Yadav A.K."/>
            <person name="Shrivastava P."/>
            <person name="Marimuthu A."/>
            <person name="Anand S."/>
            <person name="Sundaram H."/>
            <person name="Kingsbury R."/>
            <person name="Harsha H.C."/>
            <person name="Nair B."/>
            <person name="Prasad T.S."/>
            <person name="Chauhan D.S."/>
            <person name="Katoch K."/>
            <person name="Katoch V.M."/>
            <person name="Kumar P."/>
            <person name="Chaerkady R."/>
            <person name="Ramachandran S."/>
            <person name="Dash D."/>
            <person name="Pandey A."/>
        </authorList>
    </citation>
    <scope>IDENTIFICATION BY MASS SPECTROMETRY [LARGE SCALE ANALYSIS]</scope>
    <source>
        <strain>ATCC 25618 / H37Rv</strain>
    </source>
</reference>
<feature type="chain" id="PRO_0000105258" description="Putative amidase AmiC">
    <location>
        <begin position="1"/>
        <end position="473"/>
    </location>
</feature>
<feature type="active site" description="Charge relay system" evidence="1">
    <location>
        <position position="82"/>
    </location>
</feature>
<feature type="active site" description="Charge relay system" evidence="1">
    <location>
        <position position="157"/>
    </location>
</feature>
<feature type="active site" description="Acyl-ester intermediate" evidence="1">
    <location>
        <position position="181"/>
    </location>
</feature>
<organism>
    <name type="scientific">Mycobacterium tuberculosis (strain ATCC 25618 / H37Rv)</name>
    <dbReference type="NCBI Taxonomy" id="83332"/>
    <lineage>
        <taxon>Bacteria</taxon>
        <taxon>Bacillati</taxon>
        <taxon>Actinomycetota</taxon>
        <taxon>Actinomycetes</taxon>
        <taxon>Mycobacteriales</taxon>
        <taxon>Mycobacteriaceae</taxon>
        <taxon>Mycobacterium</taxon>
        <taxon>Mycobacterium tuberculosis complex</taxon>
    </lineage>
</organism>
<gene>
    <name type="primary">amiC</name>
    <name type="ordered locus">Rv2888c</name>
    <name type="ORF">MTCY274.19c</name>
</gene>
<sequence length="473" mass="50916">MSRVHAFVDDALGDLDAVALADAIRSGRVGRADVVEAAIARAEAVNPALNALAYAAFDVARDAAAMGTGQEAFFSGVPTFIKDNVDVAGQPSMHGTDAWEPYAAVADSEITRVVLGTGLVSLGKTQLSEFGFSAVAEHPRLGPVRNPWNTDYTAGASSSGSGALVAAGVVPIAHANDGGGSIRIPAACNGLVGLKPSRGRLPLEPEYRRLPVGIVANGVLTRTVRDTAAFYREAERLWRNHQLPPVGDVTSPVKQRLRIAVVTRSVLREASPEVRQLTLKLAGLLEELGHRVEHVDHPPAPASFVDDFVLYWGFLALAQVRSGRRTFGRTFDPTRLDELTLGLARHTGRNLHRLPLAIMRLRMLRRRSVRFFGTYDVLLTPTVAEATPQVGYLAPTDYQTVLDRLSSWVVFTPVQNVTGVPAISLPLAQSADGMPVGMMLSADTGREALLLELAYELEEARPWARIHAPNIAE</sequence>
<accession>P9WQ95</accession>
<accession>L0TAY0</accession>
<accession>P63494</accession>
<accession>Q10811</accession>